<name>ARCA_STREM</name>
<organism>
    <name type="scientific">Streptococcus equi subsp. zooepidemicus (strain MGCS10565)</name>
    <dbReference type="NCBI Taxonomy" id="552526"/>
    <lineage>
        <taxon>Bacteria</taxon>
        <taxon>Bacillati</taxon>
        <taxon>Bacillota</taxon>
        <taxon>Bacilli</taxon>
        <taxon>Lactobacillales</taxon>
        <taxon>Streptococcaceae</taxon>
        <taxon>Streptococcus</taxon>
    </lineage>
</organism>
<feature type="chain" id="PRO_1000100745" description="Arginine deiminase">
    <location>
        <begin position="1"/>
        <end position="411"/>
    </location>
</feature>
<feature type="active site" description="Amidino-cysteine intermediate" evidence="1">
    <location>
        <position position="401"/>
    </location>
</feature>
<gene>
    <name evidence="1" type="primary">arcA</name>
    <name type="ordered locus">Sez_0568</name>
</gene>
<keyword id="KW-0056">Arginine metabolism</keyword>
<keyword id="KW-0963">Cytoplasm</keyword>
<keyword id="KW-0378">Hydrolase</keyword>
<accession>B4U1S0</accession>
<protein>
    <recommendedName>
        <fullName evidence="1">Arginine deiminase</fullName>
        <shortName evidence="1">ADI</shortName>
        <ecNumber evidence="1">3.5.3.6</ecNumber>
    </recommendedName>
    <alternativeName>
        <fullName evidence="1">Arginine dihydrolase</fullName>
        <shortName evidence="1">AD</shortName>
    </alternativeName>
</protein>
<dbReference type="EC" id="3.5.3.6" evidence="1"/>
<dbReference type="EMBL" id="CP001129">
    <property type="protein sequence ID" value="ACG61937.1"/>
    <property type="molecule type" value="Genomic_DNA"/>
</dbReference>
<dbReference type="RefSeq" id="WP_012515213.1">
    <property type="nucleotide sequence ID" value="NC_011134.1"/>
</dbReference>
<dbReference type="SMR" id="B4U1S0"/>
<dbReference type="KEGG" id="sez:Sez_0568"/>
<dbReference type="HOGENOM" id="CLU_052662_0_1_9"/>
<dbReference type="UniPathway" id="UPA00254">
    <property type="reaction ID" value="UER00364"/>
</dbReference>
<dbReference type="Proteomes" id="UP000001873">
    <property type="component" value="Chromosome"/>
</dbReference>
<dbReference type="GO" id="GO:0005737">
    <property type="term" value="C:cytoplasm"/>
    <property type="evidence" value="ECO:0007669"/>
    <property type="project" value="UniProtKB-SubCell"/>
</dbReference>
<dbReference type="GO" id="GO:0016990">
    <property type="term" value="F:arginine deiminase activity"/>
    <property type="evidence" value="ECO:0007669"/>
    <property type="project" value="UniProtKB-UniRule"/>
</dbReference>
<dbReference type="GO" id="GO:0019547">
    <property type="term" value="P:arginine catabolic process to ornithine"/>
    <property type="evidence" value="ECO:0007669"/>
    <property type="project" value="UniProtKB-UniRule"/>
</dbReference>
<dbReference type="GO" id="GO:0019546">
    <property type="term" value="P:arginine deiminase pathway"/>
    <property type="evidence" value="ECO:0007669"/>
    <property type="project" value="TreeGrafter"/>
</dbReference>
<dbReference type="Gene3D" id="1.10.3930.10">
    <property type="entry name" value="Arginine deiminase"/>
    <property type="match status" value="1"/>
</dbReference>
<dbReference type="Gene3D" id="3.75.10.10">
    <property type="entry name" value="L-arginine/glycine Amidinotransferase, Chain A"/>
    <property type="match status" value="1"/>
</dbReference>
<dbReference type="HAMAP" id="MF_00242">
    <property type="entry name" value="Arg_deiminase"/>
    <property type="match status" value="1"/>
</dbReference>
<dbReference type="InterPro" id="IPR003876">
    <property type="entry name" value="Arg_deiminase"/>
</dbReference>
<dbReference type="NCBIfam" id="TIGR01078">
    <property type="entry name" value="arcA"/>
    <property type="match status" value="1"/>
</dbReference>
<dbReference type="NCBIfam" id="NF002381">
    <property type="entry name" value="PRK01388.1"/>
    <property type="match status" value="1"/>
</dbReference>
<dbReference type="PANTHER" id="PTHR47271">
    <property type="entry name" value="ARGININE DEIMINASE"/>
    <property type="match status" value="1"/>
</dbReference>
<dbReference type="PANTHER" id="PTHR47271:SF2">
    <property type="entry name" value="ARGININE DEIMINASE"/>
    <property type="match status" value="1"/>
</dbReference>
<dbReference type="Pfam" id="PF02274">
    <property type="entry name" value="ADI"/>
    <property type="match status" value="1"/>
</dbReference>
<dbReference type="PIRSF" id="PIRSF006356">
    <property type="entry name" value="Arg_deiminase"/>
    <property type="match status" value="1"/>
</dbReference>
<dbReference type="PRINTS" id="PR01466">
    <property type="entry name" value="ARGDEIMINASE"/>
</dbReference>
<dbReference type="SUPFAM" id="SSF55909">
    <property type="entry name" value="Pentein"/>
    <property type="match status" value="1"/>
</dbReference>
<sequence length="411" mass="46245">MTAQTPIHVYSEIGKLKKVLLHRPGKEIENLMPDYLERLLFDDIPFLEDAQKEHDAFAQALRDEGVEVLYLETLAAESLVTPEIREAFIDEYLSEANIRGRATKKAIRELLMSIEDNQELIEKTMAGVQKSELPEIPAAEKGLTDLVESSYPFAIDPMPNLYFTRDPFATIGTGVSLNHMFSETRNRETIYGKYIFTHHPIYGGGKVPMVYDRNETTRIEGGDELVLSKDVLAVGISQRTDAASIEKLLVNIFKQNLGFKKVLAFEFANNRKFMHLDTVFTMVDYDKFTIHPEIEGDLRVYSVTYENEALRIVEEKGDLAELLAANLGVEKVELIRCGGDNLVAAGREQWNDGSNTLTIAPGVVVVYNRNTITNAILESKGLKLIKIHGSELVRGRGGPRCMSMPFEREDI</sequence>
<reference key="1">
    <citation type="journal article" date="2008" name="PLoS ONE">
        <title>Genome sequence of a lancefield group C Streptococcus zooepidemicus strain causing epidemic nephritis: new information about an old disease.</title>
        <authorList>
            <person name="Beres S.B."/>
            <person name="Sesso R."/>
            <person name="Pinto S.W.L."/>
            <person name="Hoe N.P."/>
            <person name="Porcella S.F."/>
            <person name="Deleo F.R."/>
            <person name="Musser J.M."/>
        </authorList>
    </citation>
    <scope>NUCLEOTIDE SEQUENCE [LARGE SCALE GENOMIC DNA]</scope>
    <source>
        <strain>MGCS10565</strain>
    </source>
</reference>
<evidence type="ECO:0000255" key="1">
    <source>
        <dbReference type="HAMAP-Rule" id="MF_00242"/>
    </source>
</evidence>
<proteinExistence type="inferred from homology"/>
<comment type="catalytic activity">
    <reaction evidence="1">
        <text>L-arginine + H2O = L-citrulline + NH4(+)</text>
        <dbReference type="Rhea" id="RHEA:19597"/>
        <dbReference type="ChEBI" id="CHEBI:15377"/>
        <dbReference type="ChEBI" id="CHEBI:28938"/>
        <dbReference type="ChEBI" id="CHEBI:32682"/>
        <dbReference type="ChEBI" id="CHEBI:57743"/>
        <dbReference type="EC" id="3.5.3.6"/>
    </reaction>
</comment>
<comment type="pathway">
    <text evidence="1">Amino-acid degradation; L-arginine degradation via ADI pathway; carbamoyl phosphate from L-arginine: step 1/2.</text>
</comment>
<comment type="subcellular location">
    <subcellularLocation>
        <location evidence="1">Cytoplasm</location>
    </subcellularLocation>
</comment>
<comment type="similarity">
    <text evidence="1">Belongs to the arginine deiminase family.</text>
</comment>